<sequence>MEDVQSHAPQIPLNIDRVGVRELRLPLLVRDRTRGTQQTVASVDLGVDLPSEFKGTHMSRFVEALEQWNDEISYQSVRRLLQDIRQRLEARRAYARFCFPYFISKAAPASGSPALVSYQCRLTGELDDAGQHFILEVDVPVMTVCPCSKAISNEGAHSQRAMVRMRLRMKAFSWLEDFIDIAEASGSSAVYTLLKREDEKYVTEHAFAHPTFVEDVVRNVAQRLSEHGQVEWFSVEVESMESIHNHNAFARIERHISDRS</sequence>
<feature type="chain" id="PRO_1000185151" description="GTP cyclohydrolase FolE2">
    <location>
        <begin position="1"/>
        <end position="260"/>
    </location>
</feature>
<feature type="site" description="May be catalytically important" evidence="1">
    <location>
        <position position="145"/>
    </location>
</feature>
<proteinExistence type="inferred from homology"/>
<organism>
    <name type="scientific">Desulfovibrio desulfuricans (strain ATCC 27774 / DSM 6949 / MB)</name>
    <dbReference type="NCBI Taxonomy" id="525146"/>
    <lineage>
        <taxon>Bacteria</taxon>
        <taxon>Pseudomonadati</taxon>
        <taxon>Thermodesulfobacteriota</taxon>
        <taxon>Desulfovibrionia</taxon>
        <taxon>Desulfovibrionales</taxon>
        <taxon>Desulfovibrionaceae</taxon>
        <taxon>Desulfovibrio</taxon>
    </lineage>
</organism>
<comment type="function">
    <text evidence="1">Converts GTP to 7,8-dihydroneopterin triphosphate.</text>
</comment>
<comment type="catalytic activity">
    <reaction evidence="1">
        <text>GTP + H2O = 7,8-dihydroneopterin 3'-triphosphate + formate + H(+)</text>
        <dbReference type="Rhea" id="RHEA:17473"/>
        <dbReference type="ChEBI" id="CHEBI:15377"/>
        <dbReference type="ChEBI" id="CHEBI:15378"/>
        <dbReference type="ChEBI" id="CHEBI:15740"/>
        <dbReference type="ChEBI" id="CHEBI:37565"/>
        <dbReference type="ChEBI" id="CHEBI:58462"/>
        <dbReference type="EC" id="3.5.4.16"/>
    </reaction>
</comment>
<comment type="pathway">
    <text evidence="1">Cofactor biosynthesis; 7,8-dihydroneopterin triphosphate biosynthesis; 7,8-dihydroneopterin triphosphate from GTP: step 1/1.</text>
</comment>
<comment type="similarity">
    <text evidence="1">Belongs to the GTP cyclohydrolase IV family.</text>
</comment>
<name>GCH4_DESDA</name>
<protein>
    <recommendedName>
        <fullName evidence="1">GTP cyclohydrolase FolE2</fullName>
        <ecNumber evidence="1">3.5.4.16</ecNumber>
    </recommendedName>
</protein>
<evidence type="ECO:0000255" key="1">
    <source>
        <dbReference type="HAMAP-Rule" id="MF_01527"/>
    </source>
</evidence>
<reference key="1">
    <citation type="submission" date="2009-01" db="EMBL/GenBank/DDBJ databases">
        <title>Complete sequence of Desulfovibrio desulfuricans subsp. desulfuricans str. ATCC 27774.</title>
        <authorList>
            <consortium name="US DOE Joint Genome Institute"/>
            <person name="Lucas S."/>
            <person name="Copeland A."/>
            <person name="Lapidus A."/>
            <person name="Glavina del Rio T."/>
            <person name="Tice H."/>
            <person name="Bruce D."/>
            <person name="Goodwin L."/>
            <person name="Pitluck S."/>
            <person name="Sims D."/>
            <person name="Lu M."/>
            <person name="Kiss H."/>
            <person name="Meineke L."/>
            <person name="Brettin T."/>
            <person name="Detter J.C."/>
            <person name="Han C."/>
            <person name="Larimer F."/>
            <person name="Land M."/>
            <person name="Hauser L."/>
            <person name="Kyrpides N."/>
            <person name="Ovchinnikova G."/>
            <person name="Hazen T.C."/>
        </authorList>
    </citation>
    <scope>NUCLEOTIDE SEQUENCE [LARGE SCALE GENOMIC DNA]</scope>
    <source>
        <strain>ATCC 27774 / DSM 6949 / MB</strain>
    </source>
</reference>
<keyword id="KW-0378">Hydrolase</keyword>
<accession>B8J1Q5</accession>
<dbReference type="EC" id="3.5.4.16" evidence="1"/>
<dbReference type="EMBL" id="CP001358">
    <property type="protein sequence ID" value="ACL49663.1"/>
    <property type="molecule type" value="Genomic_DNA"/>
</dbReference>
<dbReference type="SMR" id="B8J1Q5"/>
<dbReference type="STRING" id="525146.Ddes_1766"/>
<dbReference type="KEGG" id="dds:Ddes_1766"/>
<dbReference type="eggNOG" id="COG1469">
    <property type="taxonomic scope" value="Bacteria"/>
</dbReference>
<dbReference type="HOGENOM" id="CLU_062816_1_1_7"/>
<dbReference type="UniPathway" id="UPA00848">
    <property type="reaction ID" value="UER00151"/>
</dbReference>
<dbReference type="GO" id="GO:0003934">
    <property type="term" value="F:GTP cyclohydrolase I activity"/>
    <property type="evidence" value="ECO:0007669"/>
    <property type="project" value="UniProtKB-UniRule"/>
</dbReference>
<dbReference type="GO" id="GO:0046654">
    <property type="term" value="P:tetrahydrofolate biosynthetic process"/>
    <property type="evidence" value="ECO:0007669"/>
    <property type="project" value="UniProtKB-UniRule"/>
</dbReference>
<dbReference type="Gene3D" id="3.10.270.10">
    <property type="entry name" value="Urate Oxidase"/>
    <property type="match status" value="1"/>
</dbReference>
<dbReference type="HAMAP" id="MF_01527_B">
    <property type="entry name" value="GTP_cyclohydrol_B"/>
    <property type="match status" value="1"/>
</dbReference>
<dbReference type="InterPro" id="IPR022838">
    <property type="entry name" value="GTP_cyclohydrolase_FolE2"/>
</dbReference>
<dbReference type="InterPro" id="IPR003801">
    <property type="entry name" value="GTP_cyclohydrolase_FolE2/MptA"/>
</dbReference>
<dbReference type="NCBIfam" id="NF010200">
    <property type="entry name" value="PRK13674.1-1"/>
    <property type="match status" value="1"/>
</dbReference>
<dbReference type="PANTHER" id="PTHR36445">
    <property type="entry name" value="GTP CYCLOHYDROLASE MPTA"/>
    <property type="match status" value="1"/>
</dbReference>
<dbReference type="PANTHER" id="PTHR36445:SF1">
    <property type="entry name" value="GTP CYCLOHYDROLASE MPTA"/>
    <property type="match status" value="1"/>
</dbReference>
<dbReference type="Pfam" id="PF02649">
    <property type="entry name" value="GCHY-1"/>
    <property type="match status" value="1"/>
</dbReference>
<gene>
    <name evidence="1" type="primary">folE2</name>
    <name type="ordered locus">Ddes_1766</name>
</gene>